<proteinExistence type="inferred from homology"/>
<protein>
    <recommendedName>
        <fullName evidence="1">Transcriptional repressor NrdR</fullName>
    </recommendedName>
</protein>
<organism>
    <name type="scientific">Caldicellulosiruptor saccharolyticus (strain ATCC 43494 / DSM 8903 / Tp8T 6331)</name>
    <dbReference type="NCBI Taxonomy" id="351627"/>
    <lineage>
        <taxon>Bacteria</taxon>
        <taxon>Bacillati</taxon>
        <taxon>Bacillota</taxon>
        <taxon>Bacillota incertae sedis</taxon>
        <taxon>Caldicellulosiruptorales</taxon>
        <taxon>Caldicellulosiruptoraceae</taxon>
        <taxon>Caldicellulosiruptor</taxon>
    </lineage>
</organism>
<dbReference type="EMBL" id="CP000679">
    <property type="protein sequence ID" value="ABP67642.1"/>
    <property type="molecule type" value="Genomic_DNA"/>
</dbReference>
<dbReference type="RefSeq" id="WP_011917577.1">
    <property type="nucleotide sequence ID" value="NC_009437.1"/>
</dbReference>
<dbReference type="SMR" id="A4XL57"/>
<dbReference type="STRING" id="351627.Csac_2057"/>
<dbReference type="KEGG" id="csc:Csac_2057"/>
<dbReference type="eggNOG" id="COG1327">
    <property type="taxonomic scope" value="Bacteria"/>
</dbReference>
<dbReference type="HOGENOM" id="CLU_108412_0_0_9"/>
<dbReference type="OrthoDB" id="9807461at2"/>
<dbReference type="Proteomes" id="UP000000256">
    <property type="component" value="Chromosome"/>
</dbReference>
<dbReference type="GO" id="GO:0005524">
    <property type="term" value="F:ATP binding"/>
    <property type="evidence" value="ECO:0007669"/>
    <property type="project" value="UniProtKB-KW"/>
</dbReference>
<dbReference type="GO" id="GO:0003677">
    <property type="term" value="F:DNA binding"/>
    <property type="evidence" value="ECO:0007669"/>
    <property type="project" value="UniProtKB-KW"/>
</dbReference>
<dbReference type="GO" id="GO:0008270">
    <property type="term" value="F:zinc ion binding"/>
    <property type="evidence" value="ECO:0007669"/>
    <property type="project" value="UniProtKB-UniRule"/>
</dbReference>
<dbReference type="GO" id="GO:0045892">
    <property type="term" value="P:negative regulation of DNA-templated transcription"/>
    <property type="evidence" value="ECO:0007669"/>
    <property type="project" value="UniProtKB-UniRule"/>
</dbReference>
<dbReference type="HAMAP" id="MF_00440">
    <property type="entry name" value="NrdR"/>
    <property type="match status" value="1"/>
</dbReference>
<dbReference type="InterPro" id="IPR005144">
    <property type="entry name" value="ATP-cone_dom"/>
</dbReference>
<dbReference type="InterPro" id="IPR055173">
    <property type="entry name" value="NrdR-like_N"/>
</dbReference>
<dbReference type="InterPro" id="IPR003796">
    <property type="entry name" value="RNR_NrdR-like"/>
</dbReference>
<dbReference type="NCBIfam" id="TIGR00244">
    <property type="entry name" value="transcriptional regulator NrdR"/>
    <property type="match status" value="1"/>
</dbReference>
<dbReference type="PANTHER" id="PTHR30455">
    <property type="entry name" value="TRANSCRIPTIONAL REPRESSOR NRDR"/>
    <property type="match status" value="1"/>
</dbReference>
<dbReference type="PANTHER" id="PTHR30455:SF2">
    <property type="entry name" value="TRANSCRIPTIONAL REPRESSOR NRDR"/>
    <property type="match status" value="1"/>
</dbReference>
<dbReference type="Pfam" id="PF03477">
    <property type="entry name" value="ATP-cone"/>
    <property type="match status" value="1"/>
</dbReference>
<dbReference type="Pfam" id="PF22811">
    <property type="entry name" value="Zn_ribbon_NrdR"/>
    <property type="match status" value="1"/>
</dbReference>
<dbReference type="PROSITE" id="PS51161">
    <property type="entry name" value="ATP_CONE"/>
    <property type="match status" value="1"/>
</dbReference>
<keyword id="KW-0067">ATP-binding</keyword>
<keyword id="KW-0238">DNA-binding</keyword>
<keyword id="KW-0479">Metal-binding</keyword>
<keyword id="KW-0547">Nucleotide-binding</keyword>
<keyword id="KW-0678">Repressor</keyword>
<keyword id="KW-0804">Transcription</keyword>
<keyword id="KW-0805">Transcription regulation</keyword>
<keyword id="KW-0862">Zinc</keyword>
<keyword id="KW-0863">Zinc-finger</keyword>
<feature type="chain" id="PRO_1000080728" description="Transcriptional repressor NrdR">
    <location>
        <begin position="1"/>
        <end position="153"/>
    </location>
</feature>
<feature type="domain" description="ATP-cone" evidence="1">
    <location>
        <begin position="49"/>
        <end position="139"/>
    </location>
</feature>
<feature type="zinc finger region" evidence="1">
    <location>
        <begin position="3"/>
        <end position="34"/>
    </location>
</feature>
<name>NRDR_CALS8</name>
<evidence type="ECO:0000255" key="1">
    <source>
        <dbReference type="HAMAP-Rule" id="MF_00440"/>
    </source>
</evidence>
<accession>A4XL57</accession>
<sequence>MRCPYCGYEDSKVIDTRPADEGRTIKRRRECLKCQKRFTTFEKVERQPILVIKKDNRREEFDRSKILNGIIKACQKRPVSIEQMNKIVDEIENEIYNSMRDEISSREIGEMVMEKLKKLDEISYVRFASVYRQFKDINTFIEELQKLLTEKIE</sequence>
<comment type="function">
    <text evidence="1">Negatively regulates transcription of bacterial ribonucleotide reductase nrd genes and operons by binding to NrdR-boxes.</text>
</comment>
<comment type="cofactor">
    <cofactor evidence="1">
        <name>Zn(2+)</name>
        <dbReference type="ChEBI" id="CHEBI:29105"/>
    </cofactor>
    <text evidence="1">Binds 1 zinc ion.</text>
</comment>
<comment type="similarity">
    <text evidence="1">Belongs to the NrdR family.</text>
</comment>
<gene>
    <name evidence="1" type="primary">nrdR</name>
    <name type="ordered locus">Csac_2057</name>
</gene>
<reference key="1">
    <citation type="submission" date="2007-04" db="EMBL/GenBank/DDBJ databases">
        <title>Genome sequence of the thermophilic hydrogen-producing bacterium Caldicellulosiruptor saccharolyticus DSM 8903.</title>
        <authorList>
            <person name="Copeland A."/>
            <person name="Lucas S."/>
            <person name="Lapidus A."/>
            <person name="Barry K."/>
            <person name="Detter J.C."/>
            <person name="Glavina del Rio T."/>
            <person name="Hammon N."/>
            <person name="Israni S."/>
            <person name="Dalin E."/>
            <person name="Tice H."/>
            <person name="Pitluck S."/>
            <person name="Kiss H."/>
            <person name="Brettin T."/>
            <person name="Bruce D."/>
            <person name="Han C."/>
            <person name="Schmutz J."/>
            <person name="Larimer F."/>
            <person name="Land M."/>
            <person name="Hauser L."/>
            <person name="Kyrpides N."/>
            <person name="Lykidis A."/>
            <person name="van de Werken H.J.G."/>
            <person name="Verhaart M.R.A."/>
            <person name="VanFossen A.L."/>
            <person name="Lewis D.L."/>
            <person name="Nichols J.D."/>
            <person name="Goorissen H.P."/>
            <person name="van Niel E.W.J."/>
            <person name="Stams F.J.M."/>
            <person name="Willquist K.U."/>
            <person name="Ward D.E."/>
            <person name="van der Oost J."/>
            <person name="Kelly R.M."/>
            <person name="Kengen S.M.W."/>
            <person name="Richardson P."/>
        </authorList>
    </citation>
    <scope>NUCLEOTIDE SEQUENCE [LARGE SCALE GENOMIC DNA]</scope>
    <source>
        <strain>ATCC 43494 / DSM 8903 / Tp8T 6331</strain>
    </source>
</reference>